<name>RS20_STRP3</name>
<comment type="function">
    <text evidence="1">Binds directly to 16S ribosomal RNA.</text>
</comment>
<comment type="similarity">
    <text evidence="1">Belongs to the bacterial ribosomal protein bS20 family.</text>
</comment>
<comment type="sequence caution" evidence="3">
    <conflict type="erroneous initiation">
        <sequence resource="EMBL-CDS" id="AAM79479"/>
    </conflict>
</comment>
<accession>P0DE84</accession>
<accession>P66510</accession>
<accession>Q99ZH0</accession>
<feature type="chain" id="PRO_0000168038" description="Small ribosomal subunit protein bS20">
    <location>
        <begin position="1"/>
        <end position="77"/>
    </location>
</feature>
<feature type="region of interest" description="Disordered" evidence="2">
    <location>
        <begin position="47"/>
        <end position="77"/>
    </location>
</feature>
<proteinExistence type="inferred from homology"/>
<protein>
    <recommendedName>
        <fullName evidence="1">Small ribosomal subunit protein bS20</fullName>
    </recommendedName>
    <alternativeName>
        <fullName evidence="3">30S ribosomal protein S20</fullName>
    </alternativeName>
</protein>
<organism>
    <name type="scientific">Streptococcus pyogenes serotype M3 (strain ATCC BAA-595 / MGAS315)</name>
    <dbReference type="NCBI Taxonomy" id="198466"/>
    <lineage>
        <taxon>Bacteria</taxon>
        <taxon>Bacillati</taxon>
        <taxon>Bacillota</taxon>
        <taxon>Bacilli</taxon>
        <taxon>Lactobacillales</taxon>
        <taxon>Streptococcaceae</taxon>
        <taxon>Streptococcus</taxon>
    </lineage>
</organism>
<sequence length="77" mass="8313">MANIKSAIKRAELNVKANEKNSAQKSAMRTAIKAFEANPSEELFRAASSSIDKAESKGLIHKNKASRDKARLAAKLG</sequence>
<reference key="1">
    <citation type="journal article" date="2002" name="Proc. Natl. Acad. Sci. U.S.A.">
        <title>Genome sequence of a serotype M3 strain of group A Streptococcus: phage-encoded toxins, the high-virulence phenotype, and clone emergence.</title>
        <authorList>
            <person name="Beres S.B."/>
            <person name="Sylva G.L."/>
            <person name="Barbian K.D."/>
            <person name="Lei B."/>
            <person name="Hoff J.S."/>
            <person name="Mammarella N.D."/>
            <person name="Liu M.-Y."/>
            <person name="Smoot J.C."/>
            <person name="Porcella S.F."/>
            <person name="Parkins L.D."/>
            <person name="Campbell D.S."/>
            <person name="Smith T.M."/>
            <person name="McCormick J.K."/>
            <person name="Leung D.Y.M."/>
            <person name="Schlievert P.M."/>
            <person name="Musser J.M."/>
        </authorList>
    </citation>
    <scope>NUCLEOTIDE SEQUENCE [LARGE SCALE GENOMIC DNA]</scope>
    <source>
        <strain>ATCC BAA-595 / MGAS315</strain>
    </source>
</reference>
<dbReference type="EMBL" id="AE014074">
    <property type="protein sequence ID" value="AAM79479.1"/>
    <property type="status" value="ALT_INIT"/>
    <property type="molecule type" value="Genomic_DNA"/>
</dbReference>
<dbReference type="SMR" id="P0DE84"/>
<dbReference type="KEGG" id="spg:SpyM3_0872"/>
<dbReference type="HOGENOM" id="CLU_160655_1_1_9"/>
<dbReference type="Proteomes" id="UP000000564">
    <property type="component" value="Chromosome"/>
</dbReference>
<dbReference type="GO" id="GO:0005829">
    <property type="term" value="C:cytosol"/>
    <property type="evidence" value="ECO:0007669"/>
    <property type="project" value="TreeGrafter"/>
</dbReference>
<dbReference type="GO" id="GO:0015935">
    <property type="term" value="C:small ribosomal subunit"/>
    <property type="evidence" value="ECO:0007669"/>
    <property type="project" value="TreeGrafter"/>
</dbReference>
<dbReference type="GO" id="GO:0070181">
    <property type="term" value="F:small ribosomal subunit rRNA binding"/>
    <property type="evidence" value="ECO:0007669"/>
    <property type="project" value="TreeGrafter"/>
</dbReference>
<dbReference type="GO" id="GO:0003735">
    <property type="term" value="F:structural constituent of ribosome"/>
    <property type="evidence" value="ECO:0007669"/>
    <property type="project" value="InterPro"/>
</dbReference>
<dbReference type="GO" id="GO:0006412">
    <property type="term" value="P:translation"/>
    <property type="evidence" value="ECO:0007669"/>
    <property type="project" value="UniProtKB-UniRule"/>
</dbReference>
<dbReference type="FunFam" id="1.20.58.110:FF:000001">
    <property type="entry name" value="30S ribosomal protein S20"/>
    <property type="match status" value="1"/>
</dbReference>
<dbReference type="Gene3D" id="1.20.58.110">
    <property type="entry name" value="Ribosomal protein S20"/>
    <property type="match status" value="1"/>
</dbReference>
<dbReference type="HAMAP" id="MF_00500">
    <property type="entry name" value="Ribosomal_bS20"/>
    <property type="match status" value="1"/>
</dbReference>
<dbReference type="InterPro" id="IPR002583">
    <property type="entry name" value="Ribosomal_bS20"/>
</dbReference>
<dbReference type="InterPro" id="IPR036510">
    <property type="entry name" value="Ribosomal_bS20_sf"/>
</dbReference>
<dbReference type="NCBIfam" id="TIGR00029">
    <property type="entry name" value="S20"/>
    <property type="match status" value="1"/>
</dbReference>
<dbReference type="PANTHER" id="PTHR33398">
    <property type="entry name" value="30S RIBOSOMAL PROTEIN S20"/>
    <property type="match status" value="1"/>
</dbReference>
<dbReference type="PANTHER" id="PTHR33398:SF1">
    <property type="entry name" value="SMALL RIBOSOMAL SUBUNIT PROTEIN BS20C"/>
    <property type="match status" value="1"/>
</dbReference>
<dbReference type="Pfam" id="PF01649">
    <property type="entry name" value="Ribosomal_S20p"/>
    <property type="match status" value="1"/>
</dbReference>
<dbReference type="SUPFAM" id="SSF46992">
    <property type="entry name" value="Ribosomal protein S20"/>
    <property type="match status" value="1"/>
</dbReference>
<keyword id="KW-0687">Ribonucleoprotein</keyword>
<keyword id="KW-0689">Ribosomal protein</keyword>
<keyword id="KW-0694">RNA-binding</keyword>
<keyword id="KW-0699">rRNA-binding</keyword>
<gene>
    <name evidence="1" type="primary">rpsT</name>
    <name evidence="1" type="synonym">rps20</name>
    <name type="ordered locus">SpyM3_0872</name>
</gene>
<evidence type="ECO:0000255" key="1">
    <source>
        <dbReference type="HAMAP-Rule" id="MF_00500"/>
    </source>
</evidence>
<evidence type="ECO:0000256" key="2">
    <source>
        <dbReference type="SAM" id="MobiDB-lite"/>
    </source>
</evidence>
<evidence type="ECO:0000305" key="3"/>